<gene>
    <name type="primary">TGIF1</name>
    <name type="synonym">TGIF</name>
</gene>
<accession>Q15583</accession>
<accession>A6NE42</accession>
<accession>A6NLU7</accession>
<accession>F8VZB6</accession>
<accession>Q6ICR0</accession>
<accession>Q8N5X9</accession>
<accession>Q9NRS0</accession>
<dbReference type="EMBL" id="X89750">
    <property type="protein sequence ID" value="CAA61897.1"/>
    <property type="molecule type" value="mRNA"/>
</dbReference>
<dbReference type="EMBL" id="AF179900">
    <property type="protein sequence ID" value="AAF81643.1"/>
    <property type="molecule type" value="mRNA"/>
</dbReference>
<dbReference type="EMBL" id="CR450333">
    <property type="protein sequence ID" value="CAG29329.1"/>
    <property type="molecule type" value="mRNA"/>
</dbReference>
<dbReference type="EMBL" id="AK291112">
    <property type="protein sequence ID" value="BAF83801.1"/>
    <property type="molecule type" value="mRNA"/>
</dbReference>
<dbReference type="EMBL" id="AP001025">
    <property type="status" value="NOT_ANNOTATED_CDS"/>
    <property type="molecule type" value="Genomic_DNA"/>
</dbReference>
<dbReference type="EMBL" id="CH471113">
    <property type="protein sequence ID" value="EAX01672.1"/>
    <property type="molecule type" value="Genomic_DNA"/>
</dbReference>
<dbReference type="EMBL" id="BC000814">
    <property type="protein sequence ID" value="AAH00814.1"/>
    <property type="molecule type" value="mRNA"/>
</dbReference>
<dbReference type="EMBL" id="BC031268">
    <property type="protein sequence ID" value="AAH31268.1"/>
    <property type="molecule type" value="mRNA"/>
</dbReference>
<dbReference type="EMBL" id="BE296707">
    <property type="status" value="NOT_ANNOTATED_CDS"/>
    <property type="molecule type" value="mRNA"/>
</dbReference>
<dbReference type="CCDS" id="CCDS11832.1">
    <molecule id="Q15583-3"/>
</dbReference>
<dbReference type="CCDS" id="CCDS11833.1">
    <molecule id="Q15583-2"/>
</dbReference>
<dbReference type="CCDS" id="CCDS11835.1">
    <molecule id="Q15583-4"/>
</dbReference>
<dbReference type="RefSeq" id="NP_001265611.1">
    <property type="nucleotide sequence ID" value="NM_001278682.1"/>
</dbReference>
<dbReference type="RefSeq" id="NP_001265613.1">
    <molecule id="Q15583-2"/>
    <property type="nucleotide sequence ID" value="NM_001278684.2"/>
</dbReference>
<dbReference type="RefSeq" id="NP_001265615.1">
    <molecule id="Q15583-4"/>
    <property type="nucleotide sequence ID" value="NM_001278686.3"/>
</dbReference>
<dbReference type="RefSeq" id="NP_001361325.1">
    <molecule id="Q15583-4"/>
    <property type="nucleotide sequence ID" value="NM_001374396.1"/>
</dbReference>
<dbReference type="RefSeq" id="NP_001361326.1">
    <molecule id="Q15583-4"/>
    <property type="nucleotide sequence ID" value="NM_001374397.1"/>
</dbReference>
<dbReference type="RefSeq" id="NP_003235.1">
    <molecule id="Q15583-2"/>
    <property type="nucleotide sequence ID" value="NM_003244.4"/>
</dbReference>
<dbReference type="RefSeq" id="NP_733796.2">
    <molecule id="Q15583-4"/>
    <property type="nucleotide sequence ID" value="NM_170695.3"/>
</dbReference>
<dbReference type="RefSeq" id="NP_775299.1">
    <molecule id="Q15583-3"/>
    <property type="nucleotide sequence ID" value="NM_173207.4"/>
</dbReference>
<dbReference type="RefSeq" id="NP_775300.1">
    <molecule id="Q15583-2"/>
    <property type="nucleotide sequence ID" value="NM_173208.3"/>
</dbReference>
<dbReference type="RefSeq" id="NP_775301.1">
    <molecule id="Q15583-4"/>
    <property type="nucleotide sequence ID" value="NM_173209.3"/>
</dbReference>
<dbReference type="RefSeq" id="NP_775302.1">
    <molecule id="Q15583-4"/>
    <property type="nucleotide sequence ID" value="NM_173210.4"/>
</dbReference>
<dbReference type="RefSeq" id="NP_775303.1">
    <molecule id="Q15583-4"/>
    <property type="nucleotide sequence ID" value="NM_173211.2"/>
</dbReference>
<dbReference type="RefSeq" id="NP_777480.1">
    <molecule id="Q15583-4"/>
    <property type="nucleotide sequence ID" value="NM_174886.3"/>
</dbReference>
<dbReference type="RefSeq" id="XP_011524037.1">
    <property type="nucleotide sequence ID" value="XM_011525735.2"/>
</dbReference>
<dbReference type="RefSeq" id="XP_016881447.1">
    <property type="nucleotide sequence ID" value="XM_017025958.1"/>
</dbReference>
<dbReference type="RefSeq" id="XP_016881448.1">
    <property type="nucleotide sequence ID" value="XM_017025959.1"/>
</dbReference>
<dbReference type="PDB" id="2LK2">
    <property type="method" value="NMR"/>
    <property type="chains" value="A=171-248"/>
</dbReference>
<dbReference type="PDB" id="6FQP">
    <property type="method" value="X-ray"/>
    <property type="resolution" value="2.42 A"/>
    <property type="chains" value="A/B=150-248"/>
</dbReference>
<dbReference type="PDB" id="6FQQ">
    <property type="method" value="X-ray"/>
    <property type="resolution" value="3.25 A"/>
    <property type="chains" value="A/B/D/E=161-229"/>
</dbReference>
<dbReference type="PDBsum" id="2LK2"/>
<dbReference type="PDBsum" id="6FQP"/>
<dbReference type="PDBsum" id="6FQQ"/>
<dbReference type="BMRB" id="Q15583"/>
<dbReference type="SASBDB" id="Q15583"/>
<dbReference type="SMR" id="Q15583"/>
<dbReference type="BioGRID" id="112908">
    <property type="interactions" value="34"/>
</dbReference>
<dbReference type="CORUM" id="Q15583"/>
<dbReference type="ELM" id="Q15583"/>
<dbReference type="FunCoup" id="Q15583">
    <property type="interactions" value="1262"/>
</dbReference>
<dbReference type="IntAct" id="Q15583">
    <property type="interactions" value="23"/>
</dbReference>
<dbReference type="MINT" id="Q15583"/>
<dbReference type="STRING" id="9606.ENSP00000327959"/>
<dbReference type="GlyGen" id="Q15583">
    <property type="glycosylation" value="3 sites, 1 O-linked glycan (1 site)"/>
</dbReference>
<dbReference type="iPTMnet" id="Q15583"/>
<dbReference type="PhosphoSitePlus" id="Q15583"/>
<dbReference type="BioMuta" id="TGIF1"/>
<dbReference type="DMDM" id="215274200"/>
<dbReference type="jPOST" id="Q15583"/>
<dbReference type="MassIVE" id="Q15583"/>
<dbReference type="PaxDb" id="9606-ENSP00000327959"/>
<dbReference type="PeptideAtlas" id="Q15583"/>
<dbReference type="ProteomicsDB" id="60646">
    <molecule id="Q15583-1"/>
</dbReference>
<dbReference type="ProteomicsDB" id="60647">
    <molecule id="Q15583-2"/>
</dbReference>
<dbReference type="ProteomicsDB" id="60648">
    <molecule id="Q15583-3"/>
</dbReference>
<dbReference type="ProteomicsDB" id="958"/>
<dbReference type="Pumba" id="Q15583"/>
<dbReference type="ABCD" id="Q15583">
    <property type="antibodies" value="1 sequenced antibody"/>
</dbReference>
<dbReference type="Antibodypedia" id="3890">
    <property type="antibodies" value="402 antibodies from 34 providers"/>
</dbReference>
<dbReference type="DNASU" id="7050"/>
<dbReference type="Ensembl" id="ENST00000330513.10">
    <molecule id="Q15583-4"/>
    <property type="protein sequence ID" value="ENSP00000327959.6"/>
    <property type="gene ID" value="ENSG00000177426.22"/>
</dbReference>
<dbReference type="Ensembl" id="ENST00000343820.10">
    <molecule id="Q15583-2"/>
    <property type="protein sequence ID" value="ENSP00000339631.6"/>
    <property type="gene ID" value="ENSG00000177426.22"/>
</dbReference>
<dbReference type="Ensembl" id="ENST00000345133.9">
    <molecule id="Q15583-4"/>
    <property type="protein sequence ID" value="ENSP00000343969.5"/>
    <property type="gene ID" value="ENSG00000177426.22"/>
</dbReference>
<dbReference type="Ensembl" id="ENST00000400167.6">
    <molecule id="Q15583-4"/>
    <property type="protein sequence ID" value="ENSP00000383031.2"/>
    <property type="gene ID" value="ENSG00000177426.22"/>
</dbReference>
<dbReference type="Ensembl" id="ENST00000401449.5">
    <molecule id="Q15583-4"/>
    <property type="protein sequence ID" value="ENSP00000385206.1"/>
    <property type="gene ID" value="ENSG00000177426.22"/>
</dbReference>
<dbReference type="Ensembl" id="ENST00000405385.7">
    <molecule id="Q15583-4"/>
    <property type="protein sequence ID" value="ENSP00000384970.2"/>
    <property type="gene ID" value="ENSG00000177426.22"/>
</dbReference>
<dbReference type="Ensembl" id="ENST00000407501.6">
    <molecule id="Q15583-2"/>
    <property type="protein sequence ID" value="ENSP00000384133.2"/>
    <property type="gene ID" value="ENSG00000177426.22"/>
</dbReference>
<dbReference type="Ensembl" id="ENST00000472042.1">
    <molecule id="Q15583-4"/>
    <property type="protein sequence ID" value="ENSP00000449501.1"/>
    <property type="gene ID" value="ENSG00000177426.22"/>
</dbReference>
<dbReference type="Ensembl" id="ENST00000548489.6">
    <molecule id="Q15583-4"/>
    <property type="protein sequence ID" value="ENSP00000447747.2"/>
    <property type="gene ID" value="ENSG00000177426.22"/>
</dbReference>
<dbReference type="Ensembl" id="ENST00000551541.5">
    <molecule id="Q15583-4"/>
    <property type="protein sequence ID" value="ENSP00000450025.1"/>
    <property type="gene ID" value="ENSG00000177426.22"/>
</dbReference>
<dbReference type="Ensembl" id="ENST00000618001.4">
    <molecule id="Q15583-3"/>
    <property type="protein sequence ID" value="ENSP00000483499.1"/>
    <property type="gene ID" value="ENSG00000177426.22"/>
</dbReference>
<dbReference type="GeneID" id="7050"/>
<dbReference type="KEGG" id="hsa:7050"/>
<dbReference type="MANE-Select" id="ENST00000343820.10">
    <molecule id="Q15583-2"/>
    <property type="protein sequence ID" value="ENSP00000339631.6"/>
    <property type="RefSeq nucleotide sequence ID" value="NM_003244.4"/>
    <property type="RefSeq protein sequence ID" value="NP_003235.1"/>
</dbReference>
<dbReference type="UCSC" id="uc002klu.5">
    <molecule id="Q15583-1"/>
    <property type="organism name" value="human"/>
</dbReference>
<dbReference type="AGR" id="HGNC:11776"/>
<dbReference type="CTD" id="7050"/>
<dbReference type="DisGeNET" id="7050"/>
<dbReference type="GeneCards" id="TGIF1"/>
<dbReference type="GeneReviews" id="TGIF1"/>
<dbReference type="HGNC" id="HGNC:11776">
    <property type="gene designation" value="TGIF1"/>
</dbReference>
<dbReference type="HPA" id="ENSG00000177426">
    <property type="expression patterns" value="Low tissue specificity"/>
</dbReference>
<dbReference type="MalaCards" id="TGIF1"/>
<dbReference type="MIM" id="142946">
    <property type="type" value="phenotype"/>
</dbReference>
<dbReference type="MIM" id="602630">
    <property type="type" value="gene"/>
</dbReference>
<dbReference type="neXtProt" id="NX_Q15583"/>
<dbReference type="OpenTargets" id="ENSG00000177426"/>
<dbReference type="Orphanet" id="93925">
    <property type="disease" value="Alobar holoprosencephaly"/>
</dbReference>
<dbReference type="Orphanet" id="93924">
    <property type="disease" value="Lobar holoprosencephaly"/>
</dbReference>
<dbReference type="Orphanet" id="280200">
    <property type="disease" value="Microform holoprosencephaly"/>
</dbReference>
<dbReference type="Orphanet" id="93926">
    <property type="disease" value="Midline interhemispheric variant of holoprosencephaly"/>
</dbReference>
<dbReference type="Orphanet" id="220386">
    <property type="disease" value="Semilobar holoprosencephaly"/>
</dbReference>
<dbReference type="Orphanet" id="280195">
    <property type="disease" value="Septopreoptic holoprosencephaly"/>
</dbReference>
<dbReference type="PharmGKB" id="PA36489"/>
<dbReference type="VEuPathDB" id="HostDB:ENSG00000177426"/>
<dbReference type="eggNOG" id="KOG0773">
    <property type="taxonomic scope" value="Eukaryota"/>
</dbReference>
<dbReference type="GeneTree" id="ENSGT00940000155230"/>
<dbReference type="InParanoid" id="Q15583"/>
<dbReference type="OMA" id="CSAGPNP"/>
<dbReference type="OrthoDB" id="10056939at2759"/>
<dbReference type="PAN-GO" id="Q15583">
    <property type="GO annotations" value="3 GO annotations based on evolutionary models"/>
</dbReference>
<dbReference type="PhylomeDB" id="Q15583"/>
<dbReference type="TreeFam" id="TF318093"/>
<dbReference type="PathwayCommons" id="Q15583"/>
<dbReference type="Reactome" id="R-HSA-2173795">
    <property type="pathway name" value="Downregulation of SMAD2/3:SMAD4 transcriptional activity"/>
</dbReference>
<dbReference type="Reactome" id="R-HSA-2173796">
    <property type="pathway name" value="SMAD2/SMAD3:SMAD4 heterotrimer regulates transcription"/>
</dbReference>
<dbReference type="SignaLink" id="Q15583"/>
<dbReference type="SIGNOR" id="Q15583"/>
<dbReference type="BioGRID-ORCS" id="7050">
    <property type="hits" value="85 hits in 1188 CRISPR screens"/>
</dbReference>
<dbReference type="CD-CODE" id="B5B9A610">
    <property type="entry name" value="PML body"/>
</dbReference>
<dbReference type="ChiTaRS" id="TGIF1">
    <property type="organism name" value="human"/>
</dbReference>
<dbReference type="EvolutionaryTrace" id="Q15583"/>
<dbReference type="GeneWiki" id="Homeobox_protein_TGIF1"/>
<dbReference type="GenomeRNAi" id="7050"/>
<dbReference type="Pharos" id="Q15583">
    <property type="development level" value="Tbio"/>
</dbReference>
<dbReference type="PRO" id="PR:Q15583"/>
<dbReference type="Proteomes" id="UP000005640">
    <property type="component" value="Chromosome 18"/>
</dbReference>
<dbReference type="RNAct" id="Q15583">
    <property type="molecule type" value="protein"/>
</dbReference>
<dbReference type="Bgee" id="ENSG00000177426">
    <property type="expression patterns" value="Expressed in stromal cell of endometrium and 185 other cell types or tissues"/>
</dbReference>
<dbReference type="ExpressionAtlas" id="Q15583">
    <property type="expression patterns" value="baseline and differential"/>
</dbReference>
<dbReference type="GO" id="GO:0000785">
    <property type="term" value="C:chromatin"/>
    <property type="evidence" value="ECO:0000247"/>
    <property type="project" value="NTNU_SB"/>
</dbReference>
<dbReference type="GO" id="GO:0005654">
    <property type="term" value="C:nucleoplasm"/>
    <property type="evidence" value="ECO:0000314"/>
    <property type="project" value="HPA"/>
</dbReference>
<dbReference type="GO" id="GO:0003682">
    <property type="term" value="F:chromatin binding"/>
    <property type="evidence" value="ECO:0007669"/>
    <property type="project" value="Ensembl"/>
</dbReference>
<dbReference type="GO" id="GO:0070410">
    <property type="term" value="F:co-SMAD binding"/>
    <property type="evidence" value="ECO:0007669"/>
    <property type="project" value="Ensembl"/>
</dbReference>
<dbReference type="GO" id="GO:0003700">
    <property type="term" value="F:DNA-binding transcription factor activity"/>
    <property type="evidence" value="ECO:0000304"/>
    <property type="project" value="ProtInc"/>
</dbReference>
<dbReference type="GO" id="GO:0000981">
    <property type="term" value="F:DNA-binding transcription factor activity, RNA polymerase II-specific"/>
    <property type="evidence" value="ECO:0000247"/>
    <property type="project" value="NTNU_SB"/>
</dbReference>
<dbReference type="GO" id="GO:0001227">
    <property type="term" value="F:DNA-binding transcription repressor activity, RNA polymerase II-specific"/>
    <property type="evidence" value="ECO:0000314"/>
    <property type="project" value="NTNU_SB"/>
</dbReference>
<dbReference type="GO" id="GO:0000978">
    <property type="term" value="F:RNA polymerase II cis-regulatory region sequence-specific DNA binding"/>
    <property type="evidence" value="ECO:0000314"/>
    <property type="project" value="NTNU_SB"/>
</dbReference>
<dbReference type="GO" id="GO:1990837">
    <property type="term" value="F:sequence-specific double-stranded DNA binding"/>
    <property type="evidence" value="ECO:0000314"/>
    <property type="project" value="ARUK-UCL"/>
</dbReference>
<dbReference type="GO" id="GO:0035881">
    <property type="term" value="P:amacrine cell differentiation"/>
    <property type="evidence" value="ECO:0007669"/>
    <property type="project" value="Ensembl"/>
</dbReference>
<dbReference type="GO" id="GO:0071363">
    <property type="term" value="P:cellular response to growth factor stimulus"/>
    <property type="evidence" value="ECO:0007669"/>
    <property type="project" value="Ensembl"/>
</dbReference>
<dbReference type="GO" id="GO:0007368">
    <property type="term" value="P:determination of left/right symmetry"/>
    <property type="evidence" value="ECO:0007669"/>
    <property type="project" value="Ensembl"/>
</dbReference>
<dbReference type="GO" id="GO:0009953">
    <property type="term" value="P:dorsal/ventral pattern formation"/>
    <property type="evidence" value="ECO:0007669"/>
    <property type="project" value="Ensembl"/>
</dbReference>
<dbReference type="GO" id="GO:0048144">
    <property type="term" value="P:fibroblast proliferation"/>
    <property type="evidence" value="ECO:0007669"/>
    <property type="project" value="Ensembl"/>
</dbReference>
<dbReference type="GO" id="GO:0008285">
    <property type="term" value="P:negative regulation of cell population proliferation"/>
    <property type="evidence" value="ECO:0007669"/>
    <property type="project" value="Ensembl"/>
</dbReference>
<dbReference type="GO" id="GO:0010629">
    <property type="term" value="P:negative regulation of gene expression"/>
    <property type="evidence" value="ECO:0007669"/>
    <property type="project" value="Ensembl"/>
</dbReference>
<dbReference type="GO" id="GO:0048387">
    <property type="term" value="P:negative regulation of retinoic acid receptor signaling pathway"/>
    <property type="evidence" value="ECO:0007669"/>
    <property type="project" value="Ensembl"/>
</dbReference>
<dbReference type="GO" id="GO:0000122">
    <property type="term" value="P:negative regulation of transcription by RNA polymerase II"/>
    <property type="evidence" value="ECO:0000314"/>
    <property type="project" value="NTNU_SB"/>
</dbReference>
<dbReference type="GO" id="GO:0001843">
    <property type="term" value="P:neural tube closure"/>
    <property type="evidence" value="ECO:0007669"/>
    <property type="project" value="Ensembl"/>
</dbReference>
<dbReference type="GO" id="GO:0038092">
    <property type="term" value="P:nodal signaling pathway"/>
    <property type="evidence" value="ECO:0007669"/>
    <property type="project" value="Ensembl"/>
</dbReference>
<dbReference type="GO" id="GO:1902871">
    <property type="term" value="P:positive regulation of amacrine cell differentiation"/>
    <property type="evidence" value="ECO:0007669"/>
    <property type="project" value="Ensembl"/>
</dbReference>
<dbReference type="GO" id="GO:0048146">
    <property type="term" value="P:positive regulation of fibroblast proliferation"/>
    <property type="evidence" value="ECO:0007669"/>
    <property type="project" value="Ensembl"/>
</dbReference>
<dbReference type="GO" id="GO:0010470">
    <property type="term" value="P:regulation of gastrulation"/>
    <property type="evidence" value="ECO:0007669"/>
    <property type="project" value="Ensembl"/>
</dbReference>
<dbReference type="GO" id="GO:0009410">
    <property type="term" value="P:response to xenobiotic stimulus"/>
    <property type="evidence" value="ECO:0007669"/>
    <property type="project" value="Ensembl"/>
</dbReference>
<dbReference type="CDD" id="cd00086">
    <property type="entry name" value="homeodomain"/>
    <property type="match status" value="1"/>
</dbReference>
<dbReference type="DisProt" id="DP02449"/>
<dbReference type="FunFam" id="1.10.10.60:FF:000059">
    <property type="entry name" value="TGFB-induced factor homeobox 1"/>
    <property type="match status" value="1"/>
</dbReference>
<dbReference type="Gene3D" id="1.10.10.60">
    <property type="entry name" value="Homeodomain-like"/>
    <property type="match status" value="1"/>
</dbReference>
<dbReference type="InterPro" id="IPR001356">
    <property type="entry name" value="HD"/>
</dbReference>
<dbReference type="InterPro" id="IPR009057">
    <property type="entry name" value="Homeodomain-like_sf"/>
</dbReference>
<dbReference type="InterPro" id="IPR008422">
    <property type="entry name" value="KN_HD"/>
</dbReference>
<dbReference type="InterPro" id="IPR050224">
    <property type="entry name" value="TALE_homeobox"/>
</dbReference>
<dbReference type="PANTHER" id="PTHR11850">
    <property type="entry name" value="HOMEOBOX PROTEIN TRANSCRIPTION FACTORS"/>
    <property type="match status" value="1"/>
</dbReference>
<dbReference type="Pfam" id="PF05920">
    <property type="entry name" value="Homeobox_KN"/>
    <property type="match status" value="1"/>
</dbReference>
<dbReference type="SMART" id="SM00389">
    <property type="entry name" value="HOX"/>
    <property type="match status" value="1"/>
</dbReference>
<dbReference type="SUPFAM" id="SSF46689">
    <property type="entry name" value="Homeodomain-like"/>
    <property type="match status" value="1"/>
</dbReference>
<dbReference type="PROSITE" id="PS50071">
    <property type="entry name" value="HOMEOBOX_2"/>
    <property type="match status" value="1"/>
</dbReference>
<proteinExistence type="evidence at protein level"/>
<evidence type="ECO:0000255" key="1">
    <source>
        <dbReference type="PROSITE-ProRule" id="PRU00108"/>
    </source>
</evidence>
<evidence type="ECO:0000256" key="2">
    <source>
        <dbReference type="SAM" id="MobiDB-lite"/>
    </source>
</evidence>
<evidence type="ECO:0000269" key="3">
    <source>
    </source>
</evidence>
<evidence type="ECO:0000269" key="4">
    <source>
    </source>
</evidence>
<evidence type="ECO:0000269" key="5">
    <source>
    </source>
</evidence>
<evidence type="ECO:0000269" key="6">
    <source ref="3"/>
</evidence>
<evidence type="ECO:0000303" key="7">
    <source>
    </source>
</evidence>
<evidence type="ECO:0000303" key="8">
    <source>
    </source>
</evidence>
<evidence type="ECO:0000303" key="9">
    <source>
    </source>
</evidence>
<evidence type="ECO:0000303" key="10">
    <source>
    </source>
</evidence>
<evidence type="ECO:0000303" key="11">
    <source ref="3"/>
</evidence>
<evidence type="ECO:0000305" key="12"/>
<evidence type="ECO:0007829" key="13">
    <source>
        <dbReference type="PDB" id="6FQP"/>
    </source>
</evidence>
<keyword id="KW-0002">3D-structure</keyword>
<keyword id="KW-0025">Alternative splicing</keyword>
<keyword id="KW-0225">Disease variant</keyword>
<keyword id="KW-0238">DNA-binding</keyword>
<keyword id="KW-0370">Holoprosencephaly</keyword>
<keyword id="KW-0371">Homeobox</keyword>
<keyword id="KW-0539">Nucleus</keyword>
<keyword id="KW-1267">Proteomics identification</keyword>
<keyword id="KW-1185">Reference proteome</keyword>
<keyword id="KW-0678">Repressor</keyword>
<keyword id="KW-0804">Transcription</keyword>
<keyword id="KW-0805">Transcription regulation</keyword>
<reference key="1">
    <citation type="journal article" date="1995" name="J. Biol. Chem.">
        <title>A novel homeobox protein which recognizes a TGT core and functionally interferes with a retinoid-responsive motif.</title>
        <authorList>
            <person name="Bertolino E."/>
            <person name="Reimund B."/>
            <person name="Wildt-Perinic D."/>
            <person name="Clerc R.G."/>
        </authorList>
    </citation>
    <scope>NUCLEOTIDE SEQUENCE [MRNA] (ISOFORM 2)</scope>
    <source>
        <tissue>Liver</tissue>
    </source>
</reference>
<reference key="2">
    <citation type="journal article" date="2000" name="J. Biol. Chem.">
        <title>Three-amino acid extension loop homeodomain proteins Meis2 and TGIF differentially regulate transcription.</title>
        <authorList>
            <person name="Yang Y."/>
            <person name="Hwang C.K."/>
            <person name="D'Souza U.M."/>
            <person name="Lee S.-H."/>
            <person name="Junn E."/>
            <person name="Mouradian M.M."/>
        </authorList>
    </citation>
    <scope>NUCLEOTIDE SEQUENCE [MRNA] (ISOFORM 2)</scope>
    <scope>VARIANT SER-292</scope>
    <source>
        <tissue>Brain</tissue>
    </source>
</reference>
<reference key="3">
    <citation type="submission" date="2004-05" db="EMBL/GenBank/DDBJ databases">
        <title>Cloning of human full open reading frames in Gateway(TM) system entry vector (pDONR201).</title>
        <authorList>
            <person name="Ebert L."/>
            <person name="Schick M."/>
            <person name="Neubert P."/>
            <person name="Schatten R."/>
            <person name="Henze S."/>
            <person name="Korn B."/>
        </authorList>
    </citation>
    <scope>NUCLEOTIDE SEQUENCE [LARGE SCALE MRNA] (ISOFORM 2)</scope>
    <scope>VARIANT SER-292</scope>
</reference>
<reference key="4">
    <citation type="journal article" date="2004" name="Nat. Genet.">
        <title>Complete sequencing and characterization of 21,243 full-length human cDNAs.</title>
        <authorList>
            <person name="Ota T."/>
            <person name="Suzuki Y."/>
            <person name="Nishikawa T."/>
            <person name="Otsuki T."/>
            <person name="Sugiyama T."/>
            <person name="Irie R."/>
            <person name="Wakamatsu A."/>
            <person name="Hayashi K."/>
            <person name="Sato H."/>
            <person name="Nagai K."/>
            <person name="Kimura K."/>
            <person name="Makita H."/>
            <person name="Sekine M."/>
            <person name="Obayashi M."/>
            <person name="Nishi T."/>
            <person name="Shibahara T."/>
            <person name="Tanaka T."/>
            <person name="Ishii S."/>
            <person name="Yamamoto J."/>
            <person name="Saito K."/>
            <person name="Kawai Y."/>
            <person name="Isono Y."/>
            <person name="Nakamura Y."/>
            <person name="Nagahari K."/>
            <person name="Murakami K."/>
            <person name="Yasuda T."/>
            <person name="Iwayanagi T."/>
            <person name="Wagatsuma M."/>
            <person name="Shiratori A."/>
            <person name="Sudo H."/>
            <person name="Hosoiri T."/>
            <person name="Kaku Y."/>
            <person name="Kodaira H."/>
            <person name="Kondo H."/>
            <person name="Sugawara M."/>
            <person name="Takahashi M."/>
            <person name="Kanda K."/>
            <person name="Yokoi T."/>
            <person name="Furuya T."/>
            <person name="Kikkawa E."/>
            <person name="Omura Y."/>
            <person name="Abe K."/>
            <person name="Kamihara K."/>
            <person name="Katsuta N."/>
            <person name="Sato K."/>
            <person name="Tanikawa M."/>
            <person name="Yamazaki M."/>
            <person name="Ninomiya K."/>
            <person name="Ishibashi T."/>
            <person name="Yamashita H."/>
            <person name="Murakawa K."/>
            <person name="Fujimori K."/>
            <person name="Tanai H."/>
            <person name="Kimata M."/>
            <person name="Watanabe M."/>
            <person name="Hiraoka S."/>
            <person name="Chiba Y."/>
            <person name="Ishida S."/>
            <person name="Ono Y."/>
            <person name="Takiguchi S."/>
            <person name="Watanabe S."/>
            <person name="Yosida M."/>
            <person name="Hotuta T."/>
            <person name="Kusano J."/>
            <person name="Kanehori K."/>
            <person name="Takahashi-Fujii A."/>
            <person name="Hara H."/>
            <person name="Tanase T.-O."/>
            <person name="Nomura Y."/>
            <person name="Togiya S."/>
            <person name="Komai F."/>
            <person name="Hara R."/>
            <person name="Takeuchi K."/>
            <person name="Arita M."/>
            <person name="Imose N."/>
            <person name="Musashino K."/>
            <person name="Yuuki H."/>
            <person name="Oshima A."/>
            <person name="Sasaki N."/>
            <person name="Aotsuka S."/>
            <person name="Yoshikawa Y."/>
            <person name="Matsunawa H."/>
            <person name="Ichihara T."/>
            <person name="Shiohata N."/>
            <person name="Sano S."/>
            <person name="Moriya S."/>
            <person name="Momiyama H."/>
            <person name="Satoh N."/>
            <person name="Takami S."/>
            <person name="Terashima Y."/>
            <person name="Suzuki O."/>
            <person name="Nakagawa S."/>
            <person name="Senoh A."/>
            <person name="Mizoguchi H."/>
            <person name="Goto Y."/>
            <person name="Shimizu F."/>
            <person name="Wakebe H."/>
            <person name="Hishigaki H."/>
            <person name="Watanabe T."/>
            <person name="Sugiyama A."/>
            <person name="Takemoto M."/>
            <person name="Kawakami B."/>
            <person name="Yamazaki M."/>
            <person name="Watanabe K."/>
            <person name="Kumagai A."/>
            <person name="Itakura S."/>
            <person name="Fukuzumi Y."/>
            <person name="Fujimori Y."/>
            <person name="Komiyama M."/>
            <person name="Tashiro H."/>
            <person name="Tanigami A."/>
            <person name="Fujiwara T."/>
            <person name="Ono T."/>
            <person name="Yamada K."/>
            <person name="Fujii Y."/>
            <person name="Ozaki K."/>
            <person name="Hirao M."/>
            <person name="Ohmori Y."/>
            <person name="Kawabata A."/>
            <person name="Hikiji T."/>
            <person name="Kobatake N."/>
            <person name="Inagaki H."/>
            <person name="Ikema Y."/>
            <person name="Okamoto S."/>
            <person name="Okitani R."/>
            <person name="Kawakami T."/>
            <person name="Noguchi S."/>
            <person name="Itoh T."/>
            <person name="Shigeta K."/>
            <person name="Senba T."/>
            <person name="Matsumura K."/>
            <person name="Nakajima Y."/>
            <person name="Mizuno T."/>
            <person name="Morinaga M."/>
            <person name="Sasaki M."/>
            <person name="Togashi T."/>
            <person name="Oyama M."/>
            <person name="Hata H."/>
            <person name="Watanabe M."/>
            <person name="Komatsu T."/>
            <person name="Mizushima-Sugano J."/>
            <person name="Satoh T."/>
            <person name="Shirai Y."/>
            <person name="Takahashi Y."/>
            <person name="Nakagawa K."/>
            <person name="Okumura K."/>
            <person name="Nagase T."/>
            <person name="Nomura N."/>
            <person name="Kikuchi H."/>
            <person name="Masuho Y."/>
            <person name="Yamashita R."/>
            <person name="Nakai K."/>
            <person name="Yada T."/>
            <person name="Nakamura Y."/>
            <person name="Ohara O."/>
            <person name="Isogai T."/>
            <person name="Sugano S."/>
        </authorList>
    </citation>
    <scope>NUCLEOTIDE SEQUENCE [LARGE SCALE MRNA] (ISOFORM 3)</scope>
</reference>
<reference key="5">
    <citation type="journal article" date="2005" name="Nature">
        <title>DNA sequence and analysis of human chromosome 18.</title>
        <authorList>
            <person name="Nusbaum C."/>
            <person name="Zody M.C."/>
            <person name="Borowsky M.L."/>
            <person name="Kamal M."/>
            <person name="Kodira C.D."/>
            <person name="Taylor T.D."/>
            <person name="Whittaker C.A."/>
            <person name="Chang J.L."/>
            <person name="Cuomo C.A."/>
            <person name="Dewar K."/>
            <person name="FitzGerald M.G."/>
            <person name="Yang X."/>
            <person name="Abouelleil A."/>
            <person name="Allen N.R."/>
            <person name="Anderson S."/>
            <person name="Bloom T."/>
            <person name="Bugalter B."/>
            <person name="Butler J."/>
            <person name="Cook A."/>
            <person name="DeCaprio D."/>
            <person name="Engels R."/>
            <person name="Garber M."/>
            <person name="Gnirke A."/>
            <person name="Hafez N."/>
            <person name="Hall J.L."/>
            <person name="Norman C.H."/>
            <person name="Itoh T."/>
            <person name="Jaffe D.B."/>
            <person name="Kuroki Y."/>
            <person name="Lehoczky J."/>
            <person name="Lui A."/>
            <person name="Macdonald P."/>
            <person name="Mauceli E."/>
            <person name="Mikkelsen T.S."/>
            <person name="Naylor J.W."/>
            <person name="Nicol R."/>
            <person name="Nguyen C."/>
            <person name="Noguchi H."/>
            <person name="O'Leary S.B."/>
            <person name="Piqani B."/>
            <person name="Smith C.L."/>
            <person name="Talamas J.A."/>
            <person name="Topham K."/>
            <person name="Totoki Y."/>
            <person name="Toyoda A."/>
            <person name="Wain H.M."/>
            <person name="Young S.K."/>
            <person name="Zeng Q."/>
            <person name="Zimmer A.R."/>
            <person name="Fujiyama A."/>
            <person name="Hattori M."/>
            <person name="Birren B.W."/>
            <person name="Sakaki Y."/>
            <person name="Lander E.S."/>
        </authorList>
    </citation>
    <scope>NUCLEOTIDE SEQUENCE [LARGE SCALE GENOMIC DNA]</scope>
</reference>
<reference key="6">
    <citation type="submission" date="2005-09" db="EMBL/GenBank/DDBJ databases">
        <authorList>
            <person name="Mural R.J."/>
            <person name="Istrail S."/>
            <person name="Sutton G."/>
            <person name="Florea L."/>
            <person name="Halpern A.L."/>
            <person name="Mobarry C.M."/>
            <person name="Lippert R."/>
            <person name="Walenz B."/>
            <person name="Shatkay H."/>
            <person name="Dew I."/>
            <person name="Miller J.R."/>
            <person name="Flanigan M.J."/>
            <person name="Edwards N.J."/>
            <person name="Bolanos R."/>
            <person name="Fasulo D."/>
            <person name="Halldorsson B.V."/>
            <person name="Hannenhalli S."/>
            <person name="Turner R."/>
            <person name="Yooseph S."/>
            <person name="Lu F."/>
            <person name="Nusskern D.R."/>
            <person name="Shue B.C."/>
            <person name="Zheng X.H."/>
            <person name="Zhong F."/>
            <person name="Delcher A.L."/>
            <person name="Huson D.H."/>
            <person name="Kravitz S.A."/>
            <person name="Mouchard L."/>
            <person name="Reinert K."/>
            <person name="Remington K.A."/>
            <person name="Clark A.G."/>
            <person name="Waterman M.S."/>
            <person name="Eichler E.E."/>
            <person name="Adams M.D."/>
            <person name="Hunkapiller M.W."/>
            <person name="Myers E.W."/>
            <person name="Venter J.C."/>
        </authorList>
    </citation>
    <scope>NUCLEOTIDE SEQUENCE [LARGE SCALE GENOMIC DNA]</scope>
</reference>
<reference key="7">
    <citation type="journal article" date="2004" name="Genome Res.">
        <title>The status, quality, and expansion of the NIH full-length cDNA project: the Mammalian Gene Collection (MGC).</title>
        <authorList>
            <consortium name="The MGC Project Team"/>
        </authorList>
    </citation>
    <scope>NUCLEOTIDE SEQUENCE [LARGE SCALE MRNA] (ISOFORMS 1 AND 2)</scope>
    <scope>NUCLEOTIDE SEQUENCE [LARGE SCALE MRNA] OF 1-137 (ISOFORM 4)</scope>
    <source>
        <tissue>Brain</tissue>
        <tissue>Placenta</tissue>
        <tissue>Rhabdomyosarcoma</tissue>
    </source>
</reference>
<reference key="8">
    <citation type="journal article" date="2000" name="Nat. Genet.">
        <title>Mutations in TGIF cause holoprosencephaly and link NODAL signalling to human neural axis determination.</title>
        <authorList>
            <person name="Gripp K.W."/>
            <person name="Wotton D."/>
            <person name="Edwards M.C."/>
            <person name="Roessler E."/>
            <person name="Ades L."/>
            <person name="Meinecke P."/>
            <person name="Richieri-Costa A."/>
            <person name="Zackai E.H."/>
            <person name="Massague J."/>
            <person name="Muenke M."/>
            <person name="Elledge S.J."/>
        </authorList>
    </citation>
    <scope>INTERACTION WITH SMAD2</scope>
    <scope>VARIANTS HPE4 CYS-157; ARG-192; ALA-280 AND PHE-291</scope>
</reference>
<reference key="9">
    <citation type="submission" date="2011-10" db="PDB data bank">
        <title>Solution NMR structure of homeobox domain (171-248) of human homeobox protein TGIF1, northeast structural genomics consortium target hr4411b.</title>
        <authorList>
            <consortium name="Northeast structural genomics consortium (NESG)"/>
        </authorList>
    </citation>
    <scope>STRUCTURE BY NMR OF 171-248</scope>
</reference>
<reference key="10">
    <citation type="journal article" date="2004" name="Hum. Mutat.">
        <title>Molecular screening of SHH, ZIC2, SIX3, and TGIF genes in patients with features of holoprosencephaly spectrum: mutation review and genotype-phenotype correlations.</title>
        <authorList>
            <person name="Dubourg C."/>
            <person name="Lazaro L."/>
            <person name="Pasquier L."/>
            <person name="Bendavid C."/>
            <person name="Blayau M."/>
            <person name="Le Duff F."/>
            <person name="Durou M.-R."/>
            <person name="Odent S."/>
            <person name="David V."/>
        </authorList>
    </citation>
    <scope>VARIANT HPE4 LEU-236</scope>
</reference>
<protein>
    <recommendedName>
        <fullName>Homeobox protein TGIF1</fullName>
    </recommendedName>
    <alternativeName>
        <fullName>5'-TG-3'-interacting factor 1</fullName>
    </alternativeName>
</protein>
<comment type="function">
    <text>Binds to a retinoid X receptor (RXR) responsive element from the cellular retinol-binding protein II promoter (CRBPII-RXRE). Inhibits the 9-cis-retinoic acid-dependent RXR alpha transcription activation of the retinoic acid responsive element. Active transcriptional corepressor of SMAD2. Links the nodal signaling pathway to the bifurcation of the forebrain and the establishment of ventral midline structures. May participate in the transmission of nuclear signals during development and in the adult, as illustrated by the down-modulation of the RXR alpha activities.</text>
</comment>
<comment type="subunit">
    <text evidence="4">Interacts with SMAD2 (PubMed:10835638). Interacts with CTBP, SMAD3 and HDAC1.</text>
</comment>
<comment type="interaction">
    <interactant intactId="EBI-714215">
        <id>Q15583</id>
    </interactant>
    <interactant intactId="EBI-77613">
        <id>P05067</id>
        <label>APP</label>
    </interactant>
    <organismsDiffer>false</organismsDiffer>
    <experiments>3</experiments>
</comment>
<comment type="interaction">
    <interactant intactId="EBI-714215">
        <id>Q15583</id>
    </interactant>
    <interactant intactId="EBI-710484">
        <id>O15169</id>
        <label>AXIN1</label>
    </interactant>
    <organismsDiffer>false</organismsDiffer>
    <experiments>4</experiments>
</comment>
<comment type="interaction">
    <interactant intactId="EBI-714215">
        <id>Q15583</id>
    </interactant>
    <interactant intactId="EBI-4400025">
        <id>Q9Y2T1</id>
        <label>AXIN2</label>
    </interactant>
    <organismsDiffer>false</organismsDiffer>
    <experiments>5</experiments>
</comment>
<comment type="interaction">
    <interactant intactId="EBI-714215">
        <id>Q15583</id>
    </interactant>
    <interactant intactId="EBI-10171858">
        <id>Q13363-2</id>
        <label>CTBP1</label>
    </interactant>
    <organismsDiffer>false</organismsDiffer>
    <experiments>3</experiments>
</comment>
<comment type="interaction">
    <interactant intactId="EBI-714215">
        <id>Q15583</id>
    </interactant>
    <interactant intactId="EBI-741533">
        <id>P56545</id>
        <label>CTBP2</label>
    </interactant>
    <organismsDiffer>false</organismsDiffer>
    <experiments>5</experiments>
</comment>
<comment type="interaction">
    <interactant intactId="EBI-714215">
        <id>Q15583</id>
    </interactant>
    <interactant intactId="EBI-25856644">
        <id>Q06787-7</id>
        <label>FMR1</label>
    </interactant>
    <organismsDiffer>false</organismsDiffer>
    <experiments>3</experiments>
</comment>
<comment type="interaction">
    <interactant intactId="EBI-714215">
        <id>Q15583</id>
    </interactant>
    <interactant intactId="EBI-740058">
        <id>O00214</id>
        <label>LGALS8</label>
    </interactant>
    <organismsDiffer>false</organismsDiffer>
    <experiments>10</experiments>
</comment>
<comment type="interaction">
    <interactant intactId="EBI-714215">
        <id>Q15583</id>
    </interactant>
    <interactant intactId="EBI-724076">
        <id>Q99750</id>
        <label>MDFI</label>
    </interactant>
    <organismsDiffer>false</organismsDiffer>
    <experiments>4</experiments>
</comment>
<comment type="interaction">
    <interactant intactId="EBI-714215">
        <id>Q15583</id>
    </interactant>
    <interactant intactId="EBI-476768">
        <id>P53350</id>
        <label>PLK1</label>
    </interactant>
    <organismsDiffer>false</organismsDiffer>
    <experiments>3</experiments>
</comment>
<comment type="interaction">
    <interactant intactId="EBI-714215">
        <id>Q15583</id>
    </interactant>
    <interactant intactId="EBI-2865290">
        <id>O14494</id>
        <label>PLPP1</label>
    </interactant>
    <organismsDiffer>false</organismsDiffer>
    <experiments>3</experiments>
</comment>
<comment type="interaction">
    <interactant intactId="EBI-714215">
        <id>Q15583</id>
    </interactant>
    <interactant intactId="EBI-295890">
        <id>P29590</id>
        <label>PML</label>
    </interactant>
    <organismsDiffer>false</organismsDiffer>
    <experiments>3</experiments>
</comment>
<comment type="interaction">
    <interactant intactId="EBI-714215">
        <id>Q15583</id>
    </interactant>
    <interactant intactId="EBI-712238">
        <id>P00491</id>
        <label>PNP</label>
    </interactant>
    <organismsDiffer>false</organismsDiffer>
    <experiments>3</experiments>
</comment>
<comment type="interaction">
    <interactant intactId="EBI-714215">
        <id>Q15583</id>
    </interactant>
    <interactant intactId="EBI-347161">
        <id>P84022</id>
        <label>SMAD3</label>
    </interactant>
    <organismsDiffer>false</organismsDiffer>
    <experiments>3</experiments>
</comment>
<comment type="interaction">
    <interactant intactId="EBI-714215">
        <id>Q15583</id>
    </interactant>
    <interactant intactId="EBI-11141397">
        <id>Q9UBQ0-2</id>
        <label>VPS29</label>
    </interactant>
    <organismsDiffer>false</organismsDiffer>
    <experiments>3</experiments>
</comment>
<comment type="interaction">
    <interactant intactId="EBI-714215">
        <id>Q15583</id>
    </interactant>
    <interactant intactId="EBI-2365912">
        <id>O35625</id>
        <label>Axin1</label>
    </interactant>
    <organismsDiffer>true</organismsDiffer>
    <experiments>2</experiments>
</comment>
<comment type="interaction">
    <interactant intactId="EBI-714215">
        <id>Q15583</id>
    </interactant>
    <interactant intactId="EBI-7690990">
        <id>O88566</id>
        <label>Axin2</label>
    </interactant>
    <organismsDiffer>true</organismsDiffer>
    <experiments>3</experiments>
</comment>
<comment type="interaction">
    <interactant intactId="EBI-12691451">
        <id>Q15583-2</id>
    </interactant>
    <interactant intactId="EBI-77613">
        <id>P05067</id>
        <label>APP</label>
    </interactant>
    <organismsDiffer>false</organismsDiffer>
    <experiments>3</experiments>
</comment>
<comment type="interaction">
    <interactant intactId="EBI-12691451">
        <id>Q15583-2</id>
    </interactant>
    <interactant intactId="EBI-10171858">
        <id>Q13363-2</id>
        <label>CTBP1</label>
    </interactant>
    <organismsDiffer>false</organismsDiffer>
    <experiments>3</experiments>
</comment>
<comment type="interaction">
    <interactant intactId="EBI-12691451">
        <id>Q15583-2</id>
    </interactant>
    <interactant intactId="EBI-741533">
        <id>P56545</id>
        <label>CTBP2</label>
    </interactant>
    <organismsDiffer>false</organismsDiffer>
    <experiments>3</experiments>
</comment>
<comment type="interaction">
    <interactant intactId="EBI-12691451">
        <id>Q15583-2</id>
    </interactant>
    <interactant intactId="EBI-9090282">
        <id>P27986-2</id>
        <label>PIK3R1</label>
    </interactant>
    <organismsDiffer>false</organismsDiffer>
    <experiments>3</experiments>
</comment>
<comment type="subcellular location">
    <subcellularLocation>
        <location>Nucleus</location>
    </subcellularLocation>
</comment>
<comment type="alternative products">
    <event type="alternative splicing"/>
    <isoform>
        <id>Q15583-1</id>
        <name>1</name>
        <sequence type="displayed"/>
    </isoform>
    <isoform>
        <id>Q15583-2</id>
        <name>2</name>
        <sequence type="described" ref="VSP_013020 VSP_013021"/>
    </isoform>
    <isoform>
        <id>Q15583-3</id>
        <name>3</name>
        <sequence type="described" ref="VSP_043108 VSP_043109"/>
    </isoform>
    <isoform>
        <id>Q15583-4</id>
        <name>4</name>
        <sequence type="described" ref="VSP_046848"/>
    </isoform>
</comment>
<comment type="disease" evidence="4 5">
    <disease id="DI-00568">
        <name>Holoprosencephaly 4</name>
        <acronym>HPE4</acronym>
        <description>A structural anomaly of the brain, in which the developing forebrain fails to correctly separate into right and left hemispheres. Holoprosencephaly is genetically heterogeneous and associated with several distinct facies and phenotypic variability.</description>
        <dbReference type="MIM" id="142946"/>
    </disease>
    <text>The disease is caused by variants affecting the gene represented in this entry.</text>
</comment>
<comment type="similarity">
    <text evidence="12">Belongs to the TALE/TGIF homeobox family.</text>
</comment>
<sequence length="401" mass="43013">MVLAQSRVSAGVGSPHCSGSGGGGSDSFPWPASHPGNPQCSFSTAFLASPRLSRGTLAYLPPAPWSSLATPSALLGSSCAPPPPPARCPQPRALSPELGTKAGPRRPHRWELPRSPSQGAQGPAPRRRLLETMKGIVAASGSETEDEDSMDIPLDLSSSAGSGKRRRRGNLPKESVQILRDWLYEHRYNAYPSEQEKALLSQQTHLSTLQVCNWFINARRRLLPDMLRKDGKDPNQFTISRRGAKISETSSVESVMGIKNFMPALEETPFHSCTAGPNPTLGRPLSPKPSSPGSVLARPSVICHTTVTALKDVPFSLCQSVGVGQNTDIQQIAAKNFTDTSLMYPEDTCKSGPSTNTQSGLFNTPPPTPPDLNQDFSGFQLLVDVALKRAAEMELQAKLTA</sequence>
<organism>
    <name type="scientific">Homo sapiens</name>
    <name type="common">Human</name>
    <dbReference type="NCBI Taxonomy" id="9606"/>
    <lineage>
        <taxon>Eukaryota</taxon>
        <taxon>Metazoa</taxon>
        <taxon>Chordata</taxon>
        <taxon>Craniata</taxon>
        <taxon>Vertebrata</taxon>
        <taxon>Euteleostomi</taxon>
        <taxon>Mammalia</taxon>
        <taxon>Eutheria</taxon>
        <taxon>Euarchontoglires</taxon>
        <taxon>Primates</taxon>
        <taxon>Haplorrhini</taxon>
        <taxon>Catarrhini</taxon>
        <taxon>Hominidae</taxon>
        <taxon>Homo</taxon>
    </lineage>
</organism>
<feature type="chain" id="PRO_0000049318" description="Homeobox protein TGIF1">
    <location>
        <begin position="1"/>
        <end position="401"/>
    </location>
</feature>
<feature type="DNA-binding region" description="Homeobox; TALE-type" evidence="1">
    <location>
        <begin position="164"/>
        <end position="226"/>
    </location>
</feature>
<feature type="region of interest" description="Disordered" evidence="2">
    <location>
        <begin position="1"/>
        <end position="34"/>
    </location>
</feature>
<feature type="region of interest" description="Disordered" evidence="2">
    <location>
        <begin position="78"/>
        <end position="127"/>
    </location>
</feature>
<feature type="region of interest" description="Disordered" evidence="2">
    <location>
        <begin position="139"/>
        <end position="170"/>
    </location>
</feature>
<feature type="region of interest" description="Disordered" evidence="2">
    <location>
        <begin position="274"/>
        <end position="293"/>
    </location>
</feature>
<feature type="short sequence motif" description="CTBP-binding motif">
    <location>
        <begin position="153"/>
        <end position="157"/>
    </location>
</feature>
<feature type="splice variant" id="VSP_046848" description="In isoform 4." evidence="9">
    <location>
        <begin position="1"/>
        <end position="149"/>
    </location>
</feature>
<feature type="splice variant" id="VSP_013020" description="In isoform 2." evidence="7 9 10 11">
    <location>
        <begin position="1"/>
        <end position="129"/>
    </location>
</feature>
<feature type="splice variant" id="VSP_043108" description="In isoform 3." evidence="8">
    <location>
        <begin position="1"/>
        <end position="115"/>
    </location>
</feature>
<feature type="splice variant" id="VSP_043109" description="In isoform 3." evidence="8">
    <original>PSQGAQGPAPRRRLLETMK</original>
    <variation>MTCSGKSCALARSSLTSSQ</variation>
    <location>
        <begin position="116"/>
        <end position="134"/>
    </location>
</feature>
<feature type="splice variant" id="VSP_013021" description="In isoform 2." evidence="7 9 10 11">
    <original>LETM</original>
    <variation>MKGK</variation>
    <location>
        <begin position="130"/>
        <end position="133"/>
    </location>
</feature>
<feature type="sequence variant" id="VAR_009961" description="In HPE4; dbSNP:rs121909066." evidence="4">
    <original>S</original>
    <variation>C</variation>
    <location>
        <position position="157"/>
    </location>
</feature>
<feature type="sequence variant" id="VAR_009962" description="In HPE4; dbSNP:rs121909067." evidence="4">
    <original>P</original>
    <variation>R</variation>
    <location>
        <position position="192"/>
    </location>
</feature>
<feature type="sequence variant" id="VAR_023803" description="In HPE4; dbSNP:rs28939693." evidence="5">
    <original>Q</original>
    <variation>L</variation>
    <location>
        <position position="236"/>
    </location>
</feature>
<feature type="sequence variant" id="VAR_009963" description="In HPE4; dbSNP:rs121909068." evidence="4">
    <original>T</original>
    <variation>A</variation>
    <location>
        <position position="280"/>
    </location>
</feature>
<feature type="sequence variant" id="VAR_047363" description="In dbSNP:rs11571512.">
    <original>P</original>
    <variation>S</variation>
    <location>
        <position position="289"/>
    </location>
</feature>
<feature type="sequence variant" id="VAR_009964" description="In HPE4; dbSNP:rs121909069." evidence="4">
    <original>S</original>
    <variation>F</variation>
    <location>
        <position position="291"/>
    </location>
</feature>
<feature type="sequence variant" id="VAR_020151" description="In dbSNP:rs2229333.">
    <original>P</original>
    <variation>L</variation>
    <location>
        <position position="292"/>
    </location>
</feature>
<feature type="sequence variant" id="VAR_061268" description="In dbSNP:rs4468717." evidence="3 6">
    <original>P</original>
    <variation>S</variation>
    <location>
        <position position="292"/>
    </location>
</feature>
<feature type="sequence conflict" description="In Ref. 7; AAH31268." evidence="12" ref="7">
    <original>P</original>
    <variation>Q</variation>
    <location>
        <position position="96"/>
    </location>
</feature>
<feature type="helix" evidence="13">
    <location>
        <begin position="173"/>
        <end position="185"/>
    </location>
</feature>
<feature type="turn" evidence="13">
    <location>
        <begin position="186"/>
        <end position="188"/>
    </location>
</feature>
<feature type="helix" evidence="13">
    <location>
        <begin position="194"/>
        <end position="204"/>
    </location>
</feature>
<feature type="helix" evidence="13">
    <location>
        <begin position="208"/>
        <end position="221"/>
    </location>
</feature>
<feature type="helix" evidence="13">
    <location>
        <begin position="223"/>
        <end position="228"/>
    </location>
</feature>
<name>TGIF1_HUMAN</name>